<accession>Q5N3U9</accession>
<proteinExistence type="inferred from homology"/>
<feature type="chain" id="PRO_0000217586" description="Photosystem II reaction center protein M">
    <location>
        <begin position="1"/>
        <end position="35"/>
    </location>
</feature>
<feature type="transmembrane region" description="Helical" evidence="1">
    <location>
        <begin position="7"/>
        <end position="27"/>
    </location>
</feature>
<organism>
    <name type="scientific">Synechococcus sp. (strain ATCC 27144 / PCC 6301 / SAUG 1402/1)</name>
    <name type="common">Anacystis nidulans</name>
    <dbReference type="NCBI Taxonomy" id="269084"/>
    <lineage>
        <taxon>Bacteria</taxon>
        <taxon>Bacillati</taxon>
        <taxon>Cyanobacteriota</taxon>
        <taxon>Cyanophyceae</taxon>
        <taxon>Synechococcales</taxon>
        <taxon>Synechococcaceae</taxon>
        <taxon>Synechococcus</taxon>
    </lineage>
</organism>
<protein>
    <recommendedName>
        <fullName evidence="1">Photosystem II reaction center protein M</fullName>
        <shortName evidence="1">PSII-M</shortName>
    </recommendedName>
</protein>
<keyword id="KW-0472">Membrane</keyword>
<keyword id="KW-0602">Photosynthesis</keyword>
<keyword id="KW-0604">Photosystem II</keyword>
<keyword id="KW-0674">Reaction center</keyword>
<keyword id="KW-0793">Thylakoid</keyword>
<keyword id="KW-0812">Transmembrane</keyword>
<keyword id="KW-1133">Transmembrane helix</keyword>
<gene>
    <name evidence="1" type="primary">psbM</name>
    <name type="ordered locus">syc0831_c</name>
</gene>
<reference key="1">
    <citation type="journal article" date="2007" name="Photosyn. Res.">
        <title>Complete nucleotide sequence of the freshwater unicellular cyanobacterium Synechococcus elongatus PCC 6301 chromosome: gene content and organization.</title>
        <authorList>
            <person name="Sugita C."/>
            <person name="Ogata K."/>
            <person name="Shikata M."/>
            <person name="Jikuya H."/>
            <person name="Takano J."/>
            <person name="Furumichi M."/>
            <person name="Kanehisa M."/>
            <person name="Omata T."/>
            <person name="Sugiura M."/>
            <person name="Sugita M."/>
        </authorList>
    </citation>
    <scope>NUCLEOTIDE SEQUENCE [LARGE SCALE GENOMIC DNA]</scope>
    <source>
        <strain>ATCC 27144 / PCC 6301 / SAUG 1402/1</strain>
    </source>
</reference>
<sequence length="35" mass="3911">MQVNELGFLASLLFVLVPSVFLIVLYIQTASREAK</sequence>
<name>PSBM_SYNP6</name>
<comment type="function">
    <text evidence="1">One of the components of the core complex of photosystem II (PSII). PSII is a light-driven water:plastoquinone oxidoreductase that uses light energy to abstract electrons from H(2)O, generating O(2) and a proton gradient subsequently used for ATP formation. It consists of a core antenna complex that captures photons, and an electron transfer chain that converts photonic excitation into a charge separation. This subunit is found at the monomer-monomer interface.</text>
</comment>
<comment type="subunit">
    <text evidence="1">PSII is composed of 1 copy each of membrane proteins PsbA, PsbB, PsbC, PsbD, PsbE, PsbF, PsbH, PsbI, PsbJ, PsbK, PsbL, PsbM, PsbT, PsbX, PsbY, PsbZ, Psb30/Ycf12, peripheral proteins PsbO, CyanoQ (PsbQ), PsbU, PsbV and a large number of cofactors. It forms dimeric complexes.</text>
</comment>
<comment type="subcellular location">
    <subcellularLocation>
        <location evidence="1">Cellular thylakoid membrane</location>
        <topology evidence="1">Single-pass membrane protein</topology>
    </subcellularLocation>
</comment>
<comment type="similarity">
    <text evidence="1">Belongs to the PsbM family.</text>
</comment>
<evidence type="ECO:0000255" key="1">
    <source>
        <dbReference type="HAMAP-Rule" id="MF_00438"/>
    </source>
</evidence>
<dbReference type="EMBL" id="AP008231">
    <property type="protein sequence ID" value="BAD79021.1"/>
    <property type="molecule type" value="Genomic_DNA"/>
</dbReference>
<dbReference type="RefSeq" id="WP_011243143.1">
    <property type="nucleotide sequence ID" value="NZ_CP085785.1"/>
</dbReference>
<dbReference type="SMR" id="Q5N3U9"/>
<dbReference type="GeneID" id="72429533"/>
<dbReference type="KEGG" id="syc:syc0831_c"/>
<dbReference type="eggNOG" id="ENOG50339PB">
    <property type="taxonomic scope" value="Bacteria"/>
</dbReference>
<dbReference type="Proteomes" id="UP000001175">
    <property type="component" value="Chromosome"/>
</dbReference>
<dbReference type="GO" id="GO:0009523">
    <property type="term" value="C:photosystem II"/>
    <property type="evidence" value="ECO:0007669"/>
    <property type="project" value="UniProtKB-KW"/>
</dbReference>
<dbReference type="GO" id="GO:0031676">
    <property type="term" value="C:plasma membrane-derived thylakoid membrane"/>
    <property type="evidence" value="ECO:0007669"/>
    <property type="project" value="UniProtKB-SubCell"/>
</dbReference>
<dbReference type="GO" id="GO:0019684">
    <property type="term" value="P:photosynthesis, light reaction"/>
    <property type="evidence" value="ECO:0007669"/>
    <property type="project" value="InterPro"/>
</dbReference>
<dbReference type="HAMAP" id="MF_00438">
    <property type="entry name" value="PSII_PsbM"/>
    <property type="match status" value="1"/>
</dbReference>
<dbReference type="InterPro" id="IPR007826">
    <property type="entry name" value="PSII_PsbM"/>
</dbReference>
<dbReference type="InterPro" id="IPR037269">
    <property type="entry name" value="PSII_PsbM_sf"/>
</dbReference>
<dbReference type="NCBIfam" id="TIGR03038">
    <property type="entry name" value="PS_II_psbM"/>
    <property type="match status" value="1"/>
</dbReference>
<dbReference type="Pfam" id="PF05151">
    <property type="entry name" value="PsbM"/>
    <property type="match status" value="1"/>
</dbReference>
<dbReference type="SUPFAM" id="SSF161033">
    <property type="entry name" value="Photosystem II reaction center protein M, PsbM"/>
    <property type="match status" value="1"/>
</dbReference>